<comment type="function">
    <text evidence="8 9 10 12 13">Component of the endosomal sorting complex required for transport II (ESCRT-II), which is required for multivesicular body (MVB) formation and sorting of endosomal cargo proteins into MVBs, and plays a role in autophagy (PubMed:38423010). The MVB pathway mediates delivery of transmembrane proteins into the lumen of the lysosome for degradation. The ESCRT-II complex is probably involved in the recruitment of the ESCRT-III complex. The ESCRT-II complex may also play a role in transcription regulation by participating in derepression of transcription by RNA polymerase II, possibly via its interaction with ELL. Required for degradation of both endocytosed EGF and EGFR, but not for the EGFR ligand-mediated internalization. It is also required for the degradation of CXCR4. Required for the exosomal release of SDCBP, CD63 and syndecan (PubMed:22660413).</text>
</comment>
<comment type="subunit">
    <text evidence="2 3 4 5 6 7 8 11">Component of the endosomal sorting complex required for transport II (ESCRT-II), composed of SNF8, VPS25 and VPS36. SNF8 is essential for the stability of the ESCRT-II complex. ESCRT-II interacts with ELL. Interacts with TSG101 (via the C-terminal domain). Interacts with RILPL1 (via the N-terminal domain); which recruits ESCRT-II to the endosome membranes. Interacts with 14-3-3 proteins.</text>
</comment>
<comment type="interaction">
    <interactant intactId="EBI-747719">
        <id>Q96H20</id>
    </interactant>
    <interactant intactId="EBI-11745576">
        <id>Q6PJH3</id>
        <label>AKAP9</label>
    </interactant>
    <organismsDiffer>false</organismsDiffer>
    <experiments>3</experiments>
</comment>
<comment type="interaction">
    <interactant intactId="EBI-747719">
        <id>Q96H20</id>
    </interactant>
    <interactant intactId="EBI-718729">
        <id>P55212</id>
        <label>CASP6</label>
    </interactant>
    <organismsDiffer>false</organismsDiffer>
    <experiments>3</experiments>
</comment>
<comment type="interaction">
    <interactant intactId="EBI-747719">
        <id>Q96H20</id>
    </interactant>
    <interactant intactId="EBI-2559831">
        <id>Q92989</id>
        <label>CLP1</label>
    </interactant>
    <organismsDiffer>false</organismsDiffer>
    <experiments>3</experiments>
</comment>
<comment type="interaction">
    <interactant intactId="EBI-747719">
        <id>Q96H20</id>
    </interactant>
    <interactant intactId="EBI-6873363">
        <id>Q8WUE5</id>
        <label>CT55</label>
    </interactant>
    <organismsDiffer>false</organismsDiffer>
    <experiments>3</experiments>
</comment>
<comment type="interaction">
    <interactant intactId="EBI-747719">
        <id>Q96H20</id>
    </interactant>
    <interactant intactId="EBI-12593112">
        <id>O75190-2</id>
        <label>DNAJB6</label>
    </interactant>
    <organismsDiffer>false</organismsDiffer>
    <experiments>3</experiments>
</comment>
<comment type="interaction">
    <interactant intactId="EBI-747719">
        <id>Q96H20</id>
    </interactant>
    <interactant intactId="EBI-1245868">
        <id>P55199</id>
        <label>ELL</label>
    </interactant>
    <organismsDiffer>false</organismsDiffer>
    <experiments>3</experiments>
</comment>
<comment type="interaction">
    <interactant intactId="EBI-747719">
        <id>Q96H20</id>
    </interactant>
    <interactant intactId="EBI-2339898">
        <id>Q9NW38</id>
        <label>FANCL</label>
    </interactant>
    <organismsDiffer>false</organismsDiffer>
    <experiments>3</experiments>
</comment>
<comment type="interaction">
    <interactant intactId="EBI-747719">
        <id>Q96H20</id>
    </interactant>
    <interactant intactId="EBI-748515">
        <id>Q8IVS8</id>
        <label>GLYCTK</label>
    </interactant>
    <organismsDiffer>false</organismsDiffer>
    <experiments>5</experiments>
</comment>
<comment type="interaction">
    <interactant intactId="EBI-747719">
        <id>Q96H20</id>
    </interactant>
    <interactant intactId="EBI-618309">
        <id>Q08379</id>
        <label>GOLGA2</label>
    </interactant>
    <organismsDiffer>false</organismsDiffer>
    <experiments>3</experiments>
</comment>
<comment type="interaction">
    <interactant intactId="EBI-747719">
        <id>Q96H20</id>
    </interactant>
    <interactant intactId="EBI-710124">
        <id>O60341</id>
        <label>KDM1A</label>
    </interactant>
    <organismsDiffer>false</organismsDiffer>
    <experiments>2</experiments>
</comment>
<comment type="interaction">
    <interactant intactId="EBI-747719">
        <id>Q96H20</id>
    </interactant>
    <interactant intactId="EBI-948266">
        <id>O14901</id>
        <label>KLF11</label>
    </interactant>
    <organismsDiffer>false</organismsDiffer>
    <experiments>3</experiments>
</comment>
<comment type="interaction">
    <interactant intactId="EBI-747719">
        <id>Q96H20</id>
    </interactant>
    <interactant intactId="EBI-21591415">
        <id>P13473-2</id>
        <label>LAMP2</label>
    </interactant>
    <organismsDiffer>false</organismsDiffer>
    <experiments>3</experiments>
</comment>
<comment type="interaction">
    <interactant intactId="EBI-747719">
        <id>Q96H20</id>
    </interactant>
    <interactant intactId="EBI-374819">
        <id>P49736</id>
        <label>MCM2</label>
    </interactant>
    <organismsDiffer>false</organismsDiffer>
    <experiments>8</experiments>
</comment>
<comment type="interaction">
    <interactant intactId="EBI-747719">
        <id>Q96H20</id>
    </interactant>
    <interactant intactId="EBI-295301">
        <id>P24928</id>
        <label>POLR2A</label>
    </interactant>
    <organismsDiffer>false</organismsDiffer>
    <experiments>2</experiments>
</comment>
<comment type="interaction">
    <interactant intactId="EBI-747719">
        <id>Q96H20</id>
    </interactant>
    <interactant intactId="EBI-912440">
        <id>Q96LA8</id>
        <label>PRMT6</label>
    </interactant>
    <organismsDiffer>false</organismsDiffer>
    <experiments>2</experiments>
</comment>
<comment type="interaction">
    <interactant intactId="EBI-747719">
        <id>Q96H20</id>
    </interactant>
    <interactant intactId="EBI-5280197">
        <id>O75400-2</id>
        <label>PRPF40A</label>
    </interactant>
    <organismsDiffer>false</organismsDiffer>
    <experiments>3</experiments>
</comment>
<comment type="interaction">
    <interactant intactId="EBI-747719">
        <id>Q96H20</id>
    </interactant>
    <interactant intactId="EBI-286642">
        <id>P62826</id>
        <label>RAN</label>
    </interactant>
    <organismsDiffer>false</organismsDiffer>
    <experiments>3</experiments>
</comment>
<comment type="interaction">
    <interactant intactId="EBI-747719">
        <id>Q96H20</id>
    </interactant>
    <interactant intactId="EBI-358489">
        <id>Q96GM5</id>
        <label>SMARCD1</label>
    </interactant>
    <organismsDiffer>false</organismsDiffer>
    <experiments>3</experiments>
</comment>
<comment type="interaction">
    <interactant intactId="EBI-747719">
        <id>Q96H20</id>
    </interactant>
    <interactant intactId="EBI-358189">
        <id>O95793-2</id>
        <label>STAU1</label>
    </interactant>
    <organismsDiffer>false</organismsDiffer>
    <experiments>3</experiments>
</comment>
<comment type="interaction">
    <interactant intactId="EBI-747719">
        <id>Q96H20</id>
    </interactant>
    <interactant intactId="EBI-3921347">
        <id>P51687</id>
        <label>SUOX</label>
    </interactant>
    <organismsDiffer>false</organismsDiffer>
    <experiments>5</experiments>
</comment>
<comment type="interaction">
    <interactant intactId="EBI-747719">
        <id>Q96H20</id>
    </interactant>
    <interactant intactId="EBI-2130429">
        <id>Q9BYV2</id>
        <label>TRIM54</label>
    </interactant>
    <organismsDiffer>false</organismsDiffer>
    <experiments>6</experiments>
</comment>
<comment type="interaction">
    <interactant intactId="EBI-747719">
        <id>Q96H20</id>
    </interactant>
    <interactant intactId="EBI-359793">
        <id>P40222</id>
        <label>TXLNA</label>
    </interactant>
    <organismsDiffer>false</organismsDiffer>
    <experiments>3</experiments>
</comment>
<comment type="interaction">
    <interactant intactId="EBI-747719">
        <id>Q96H20</id>
    </interactant>
    <interactant intactId="EBI-2107455">
        <id>Q08AM6</id>
        <label>VAC14</label>
    </interactant>
    <organismsDiffer>false</organismsDiffer>
    <experiments>4</experiments>
</comment>
<comment type="interaction">
    <interactant intactId="EBI-747719">
        <id>Q96H20</id>
    </interactant>
    <interactant intactId="EBI-741945">
        <id>Q9BRG1</id>
        <label>VPS25</label>
    </interactant>
    <organismsDiffer>false</organismsDiffer>
    <experiments>20</experiments>
</comment>
<comment type="interaction">
    <interactant intactId="EBI-747719">
        <id>Q96H20</id>
    </interactant>
    <interactant intactId="EBI-4401822">
        <id>Q86VN1</id>
        <label>VPS36</label>
    </interactant>
    <organismsDiffer>false</organismsDiffer>
    <experiments>9</experiments>
</comment>
<comment type="subcellular location">
    <subcellularLocation>
        <location>Cytoplasm</location>
    </subcellularLocation>
    <subcellularLocation>
        <location>Endosome membrane</location>
    </subcellularLocation>
    <subcellularLocation>
        <location evidence="15">Nucleus</location>
    </subcellularLocation>
    <subcellularLocation>
        <location>Late endosome membrane</location>
    </subcellularLocation>
    <text>Recruited to the endosome membrane to participate in vesicle formation.</text>
</comment>
<comment type="alternative products">
    <event type="alternative splicing"/>
    <isoform>
        <id>Q96H20-1</id>
        <name>1</name>
        <sequence type="displayed"/>
    </isoform>
    <isoform>
        <id>Q96H20-2</id>
        <name>2</name>
        <sequence type="described" ref="VSP_015340"/>
    </isoform>
</comment>
<comment type="disease" evidence="13">
    <disease id="DI-06882">
        <name>Developmental and epileptic encephalopathy 115</name>
        <acronym>DEE115</acronym>
        <description>A form of epileptic encephalopathy, a heterogeneous group of early-onset epilepsies characterized by refractory seizures, neurodevelopmental impairment, and poor prognosis. Development is normal prior to seizure onset, after which cognitive and motor delays become apparent. DEE115 is an autosomal recessive, severe form characterized by onset soon after birth. Affected individuals show massive reduction of white matter, hypo- or aplasia of the corpus callosum, and neurodevelopmental arrest. Death in the first year of life may occur.</description>
        <dbReference type="MIM" id="620783"/>
    </disease>
    <text>The disease is caused by variants affecting the gene represented in this entry.</text>
</comment>
<comment type="disease" evidence="13">
    <disease id="DI-06883">
        <name>Neurodevelopmental disorder plus optic atrophy</name>
        <acronym>NEDOA</acronym>
        <description>An autosomal recessive disorder characterized by mild developmental delay, intellectual disability and childhood-onset optic atrophy or ataxia.</description>
        <dbReference type="MIM" id="620784"/>
    </disease>
    <text>The disease is caused by variants affecting the gene represented in this entry.</text>
</comment>
<comment type="similarity">
    <text evidence="15">Belongs to the SNF8 family.</text>
</comment>
<feature type="chain" id="PRO_0000215209" description="Vacuolar-sorting protein SNF8">
    <location>
        <begin position="1"/>
        <end position="258"/>
    </location>
</feature>
<feature type="coiled-coil region" evidence="1">
    <location>
        <begin position="27"/>
        <end position="53"/>
    </location>
</feature>
<feature type="modified residue" description="Omega-N-methylarginine" evidence="16">
    <location>
        <position position="4"/>
    </location>
</feature>
<feature type="splice variant" id="VSP_015340" description="In isoform 2." evidence="14">
    <location>
        <position position="189"/>
    </location>
</feature>
<feature type="sequence variant" id="VAR_089579" description="In DEE115 and NEDOA; likely pathogenic; dbSNP:rs2041013413." evidence="13">
    <original>P</original>
    <variation>L</variation>
    <location>
        <position position="79"/>
    </location>
</feature>
<feature type="sequence variant" id="VAR_089580" description="In NEDOA; likely pathogenic; fails to rescue defective embryo development in a zebrafish disease model; dbSNP:rs200399045." evidence="13">
    <original>V</original>
    <variation>I</variation>
    <location>
        <position position="102"/>
    </location>
</feature>
<feature type="sequence variant" id="VAR_089581" description="In DEE115; pathogenic; fails to rescue defective embryo development in a zebrafish disease model." evidence="13">
    <location>
        <begin position="167"/>
        <end position="258"/>
    </location>
</feature>
<feature type="sequence variant" id="VAR_089582" description="In DEE115; likely pathogenic; dbSNP:rs2040862241." evidence="13">
    <original>G</original>
    <variation>D</variation>
    <location>
        <position position="191"/>
    </location>
</feature>
<feature type="sequence variant" id="VAR_089583" description="In DEE115; likely pathogenic." evidence="13">
    <original>R</original>
    <variation>L</variation>
    <location>
        <position position="208"/>
    </location>
</feature>
<feature type="sequence conflict" description="In Ref. 1; AAD46560." evidence="15" ref="1">
    <original>A</original>
    <variation>P</variation>
    <location>
        <position position="250"/>
    </location>
</feature>
<feature type="helix" evidence="17">
    <location>
        <begin position="37"/>
        <end position="60"/>
    </location>
</feature>
<feature type="helix" evidence="17">
    <location>
        <begin position="62"/>
        <end position="75"/>
    </location>
</feature>
<feature type="helix" evidence="17">
    <location>
        <begin position="86"/>
        <end position="91"/>
    </location>
</feature>
<feature type="helix" evidence="17">
    <location>
        <begin position="93"/>
        <end position="115"/>
    </location>
</feature>
<feature type="strand" evidence="17">
    <location>
        <begin position="116"/>
        <end position="120"/>
    </location>
</feature>
<feature type="helix" evidence="17">
    <location>
        <begin position="121"/>
        <end position="130"/>
    </location>
</feature>
<feature type="turn" evidence="17">
    <location>
        <begin position="131"/>
        <end position="134"/>
    </location>
</feature>
<feature type="helix" evidence="17">
    <location>
        <begin position="141"/>
        <end position="151"/>
    </location>
</feature>
<feature type="helix" evidence="17">
    <location>
        <begin position="152"/>
        <end position="154"/>
    </location>
</feature>
<feature type="strand" evidence="17">
    <location>
        <begin position="155"/>
        <end position="157"/>
    </location>
</feature>
<feature type="strand" evidence="17">
    <location>
        <begin position="159"/>
        <end position="163"/>
    </location>
</feature>
<feature type="strand" evidence="17">
    <location>
        <begin position="166"/>
        <end position="170"/>
    </location>
</feature>
<feature type="helix" evidence="17">
    <location>
        <begin position="178"/>
        <end position="187"/>
    </location>
</feature>
<feature type="turn" evidence="17">
    <location>
        <begin position="188"/>
        <end position="190"/>
    </location>
</feature>
<feature type="strand" evidence="17">
    <location>
        <begin position="191"/>
        <end position="193"/>
    </location>
</feature>
<feature type="helix" evidence="17">
    <location>
        <begin position="195"/>
        <end position="202"/>
    </location>
</feature>
<feature type="helix" evidence="17">
    <location>
        <begin position="206"/>
        <end position="218"/>
    </location>
</feature>
<feature type="strand" evidence="17">
    <location>
        <begin position="223"/>
        <end position="231"/>
    </location>
</feature>
<feature type="strand" evidence="17">
    <location>
        <begin position="233"/>
        <end position="235"/>
    </location>
</feature>
<feature type="helix" evidence="17">
    <location>
        <begin position="249"/>
        <end position="251"/>
    </location>
</feature>
<reference key="1">
    <citation type="journal article" date="1999" name="J. Biol. Chem.">
        <title>Cloning and characterization of the EAP30 subunit of the ELL complex that confers derepression of transcription by RNA polymerase II.</title>
        <authorList>
            <person name="Schmidt A.E."/>
            <person name="Miller T."/>
            <person name="Schmidt S.L."/>
            <person name="Shiekhattar R."/>
            <person name="Shilatifard A."/>
        </authorList>
    </citation>
    <scope>NUCLEOTIDE SEQUENCE [MRNA]</scope>
</reference>
<reference key="2">
    <citation type="journal article" date="2004" name="Genome Res.">
        <title>The status, quality, and expansion of the NIH full-length cDNA project: the Mammalian Gene Collection (MGC).</title>
        <authorList>
            <consortium name="The MGC Project Team"/>
        </authorList>
    </citation>
    <scope>NUCLEOTIDE SEQUENCE [LARGE SCALE MRNA] (ISOFORMS 1 AND 2)</scope>
    <source>
        <tissue>Pancreas</tissue>
        <tissue>Placenta</tissue>
    </source>
</reference>
<reference key="3">
    <citation type="journal article" date="2003" name="Cell">
        <title>The protein network of HIV budding.</title>
        <authorList>
            <person name="von Schwedler U.K."/>
            <person name="Stuchell M."/>
            <person name="Mueller B."/>
            <person name="Ward D.M."/>
            <person name="Chung H.-Y."/>
            <person name="Morita E."/>
            <person name="Wang H.E."/>
            <person name="Davis T."/>
            <person name="He G.P."/>
            <person name="Cimbora D.M."/>
            <person name="Scott A."/>
            <person name="Kraeusslich H.-G."/>
            <person name="Kaplan J."/>
            <person name="Morham S.G."/>
            <person name="Sundquist W.I."/>
        </authorList>
    </citation>
    <scope>SELF-ASSOCIATION</scope>
    <scope>INTERACTION WITH VPS25; VPS36 AND TSG101</scope>
</reference>
<reference key="4">
    <citation type="journal article" date="2003" name="Proc. Natl. Acad. Sci. U.S.A.">
        <title>Divergent retroviral late-budding domains recruit vacuolar protein sorting factors by using alternative adaptor proteins.</title>
        <authorList>
            <person name="Martin-Serrano J."/>
            <person name="Yarovoy A."/>
            <person name="Perez-Caballero D."/>
            <person name="Bieniasz P.D."/>
        </authorList>
    </citation>
    <scope>IDENTIFICATION IN THE ESCRT-II COMPLEX</scope>
    <scope>INTERACTION WITH VPS36 AND VPS25</scope>
</reference>
<reference key="5">
    <citation type="journal article" date="2003" name="Proc. Natl. Acad. Sci. U.S.A.">
        <authorList>
            <person name="Martin-Serrano J."/>
            <person name="Yarovoy A."/>
            <person name="Perez-Caballero D."/>
            <person name="Bieniasz P.D."/>
        </authorList>
    </citation>
    <scope>ERRATUM OF PUBMED:14519844</scope>
</reference>
<reference key="6">
    <citation type="journal article" date="2006" name="Biochem. Biophys. Res. Commun.">
        <title>RILP interacts with the VPS22 component of the ESCRT-II complex.</title>
        <authorList>
            <person name="Progida C."/>
            <person name="Spinosa M.R."/>
            <person name="De Luca A."/>
            <person name="Bucci C."/>
        </authorList>
    </citation>
    <scope>INTERACTION WITH RILPL1</scope>
    <scope>SUBCELLULAR LOCATION</scope>
</reference>
<reference key="7">
    <citation type="journal article" date="2006" name="Biochem. Biophys. Res. Commun.">
        <title>RILP interacts with VPS22 and VPS36 of ESCRT-II and regulates their membrane recruitment.</title>
        <authorList>
            <person name="Wang T."/>
            <person name="Hong W."/>
        </authorList>
    </citation>
    <scope>INTERACTION WITH VPS25; VPS36 AND RILPL1</scope>
    <scope>SUBCELLULAR LOCATION</scope>
</reference>
<reference key="8">
    <citation type="journal article" date="2006" name="J. Neurosci. Methods">
        <title>Rapid identification of 14-3-3-binding proteins by protein microarray analysis.</title>
        <authorList>
            <person name="Satoh J."/>
            <person name="Nanri Y."/>
            <person name="Yamamura T."/>
        </authorList>
    </citation>
    <scope>INTERACTION WITH 14-3-3 PROTEINS</scope>
</reference>
<reference key="9">
    <citation type="journal article" date="2006" name="J. Virol.">
        <title>Human ESCRT-II complex and its role in human immunodeficiency virus type 1 release.</title>
        <authorList>
            <person name="Langelier C."/>
            <person name="von Schwedler U.K."/>
            <person name="Fisher R.D."/>
            <person name="De Domenico I."/>
            <person name="White P.L."/>
            <person name="Hill C.P."/>
            <person name="Kaplan J."/>
            <person name="Ward D."/>
            <person name="Sundquist W.I."/>
        </authorList>
    </citation>
    <scope>INTERACTION WITH VPS25; VPS36 AND TSG101</scope>
    <scope>SUBCELLULAR LOCATION</scope>
</reference>
<reference key="10">
    <citation type="journal article" date="2007" name="J. Cell Sci.">
        <title>RILP is required for the proper morphology and function of late endosomes.</title>
        <authorList>
            <person name="Progida C."/>
            <person name="Malerod L."/>
            <person name="Stuffers S."/>
            <person name="Brech A."/>
            <person name="Bucci C."/>
            <person name="Stenmark H."/>
        </authorList>
    </citation>
    <scope>FUNCTION</scope>
</reference>
<reference key="11">
    <citation type="journal article" date="2007" name="Traffic">
        <title>Vps22/EAP30 in ESCRT-II mediates endosomal sorting of growth factor and chemokine receptors destined for lysosomal degradation.</title>
        <authorList>
            <person name="Maleroed L."/>
            <person name="Stuffers S."/>
            <person name="Brech A."/>
            <person name="Stenmark H."/>
        </authorList>
    </citation>
    <scope>FUNCTION</scope>
    <scope>SUBCELLULAR LOCATION</scope>
    <scope>SUBUNIT</scope>
</reference>
<reference key="12">
    <citation type="journal article" date="2008" name="Exp. Cell Res.">
        <title>Differential functions of Hrs and ESCRT proteins in endocytic membrane trafficking.</title>
        <authorList>
            <person name="Raiborg C."/>
            <person name="Malerod L."/>
            <person name="Pedersen N.M."/>
            <person name="Stenmark H."/>
        </authorList>
    </citation>
    <scope>FUNCTION</scope>
</reference>
<reference key="13">
    <citation type="journal article" date="2011" name="BMC Syst. Biol.">
        <title>Initial characterization of the human central proteome.</title>
        <authorList>
            <person name="Burkard T.R."/>
            <person name="Planyavsky M."/>
            <person name="Kaupe I."/>
            <person name="Breitwieser F.P."/>
            <person name="Buerckstuemmer T."/>
            <person name="Bennett K.L."/>
            <person name="Superti-Furga G."/>
            <person name="Colinge J."/>
        </authorList>
    </citation>
    <scope>IDENTIFICATION BY MASS SPECTROMETRY [LARGE SCALE ANALYSIS]</scope>
</reference>
<reference key="14">
    <citation type="journal article" date="2012" name="Nat. Cell Biol.">
        <title>Syndecan-syntenin-ALIX regulates the biogenesis of exosomes.</title>
        <authorList>
            <person name="Baietti M.F."/>
            <person name="Zhang Z."/>
            <person name="Mortier E."/>
            <person name="Melchior A."/>
            <person name="Degeest G."/>
            <person name="Geeraerts A."/>
            <person name="Ivarsson Y."/>
            <person name="Depoortere F."/>
            <person name="Coomans C."/>
            <person name="Vermeiren E."/>
            <person name="Zimmermann P."/>
            <person name="David G."/>
        </authorList>
    </citation>
    <scope>FUNCTION</scope>
</reference>
<reference key="15">
    <citation type="journal article" date="2014" name="Mol. Cell. Proteomics">
        <title>Immunoaffinity enrichment and mass spectrometry analysis of protein methylation.</title>
        <authorList>
            <person name="Guo A."/>
            <person name="Gu H."/>
            <person name="Zhou J."/>
            <person name="Mulhern D."/>
            <person name="Wang Y."/>
            <person name="Lee K.A."/>
            <person name="Yang V."/>
            <person name="Aguiar M."/>
            <person name="Kornhauser J."/>
            <person name="Jia X."/>
            <person name="Ren J."/>
            <person name="Beausoleil S.A."/>
            <person name="Silva J.C."/>
            <person name="Vemulapalli V."/>
            <person name="Bedford M.T."/>
            <person name="Comb M.J."/>
        </authorList>
    </citation>
    <scope>METHYLATION [LARGE SCALE ANALYSIS] AT ARG-4</scope>
    <scope>IDENTIFICATION BY MASS SPECTROMETRY [LARGE SCALE ANALYSIS]</scope>
    <source>
        <tissue>Colon carcinoma</tissue>
    </source>
</reference>
<reference key="16">
    <citation type="journal article" date="2008" name="Dev. Cell">
        <title>Integrated structural model and membrane targeting mechanism of the human ESCRT-II complex.</title>
        <authorList>
            <person name="Im Y.J."/>
            <person name="Hurley J.H."/>
        </authorList>
    </citation>
    <scope>X-RAY CRYSTALLOGRAPHY (2.61 ANGSTROMS) OF 25-258 IN COMPLEX WITH VPS25 AND VPS36</scope>
</reference>
<reference key="17">
    <citation type="journal article" date="2024" name="Am. J. Hum. Genet.">
        <title>Bi-allelic variants in SNF8 cause a disease spectrum ranging from severe developmental and epileptic encephalopathy to syndromic optic atrophy.</title>
        <authorList>
            <person name="Brugger M."/>
            <person name="Lauri A."/>
            <person name="Zhen Y."/>
            <person name="Gramegna L.L."/>
            <person name="Zott B."/>
            <person name="Sekulic N."/>
            <person name="Fasano G."/>
            <person name="Kopajtich R."/>
            <person name="Cordeddu V."/>
            <person name="Radio F.C."/>
            <person name="Mancini C."/>
            <person name="Pizzi S."/>
            <person name="Paradisi G."/>
            <person name="Zanni G."/>
            <person name="Vasco G."/>
            <person name="Carrozzo R."/>
            <person name="Palombo F."/>
            <person name="Tonon C."/>
            <person name="Lodi R."/>
            <person name="La Morgia C."/>
            <person name="Arelin M."/>
            <person name="Blechschmidt C."/>
            <person name="Finck T."/>
            <person name="Soerensen V."/>
            <person name="Kreiser K."/>
            <person name="Strobl-Wildemann G."/>
            <person name="Daum H."/>
            <person name="Michaelson-Cohen R."/>
            <person name="Ziccardi L."/>
            <person name="Zampino G."/>
            <person name="Prokisch H."/>
            <person name="Abou Jamra R."/>
            <person name="Fiorini C."/>
            <person name="Arzberger T."/>
            <person name="Winkelmann J."/>
            <person name="Caporali L."/>
            <person name="Carelli V."/>
            <person name="Stenmark H."/>
            <person name="Tartaglia M."/>
            <person name="Wagner M."/>
        </authorList>
    </citation>
    <scope>VARIANTS DEE115 LEU-79; 167-TYR--PRO-258 DEL; ASP-191 AND LEU-208</scope>
    <scope>VARIANTS NEDOA LEU-79 AND ILE-102</scope>
    <scope>CHARACTERIZATION OF VARIANT DEE115 167-TYR--PRO-258 DEL</scope>
    <scope>CHARACTERIZATION OF VARIANT NEDOA ILE-102</scope>
    <scope>INVOLVEMENT IN DEE115</scope>
    <scope>INVOLVEMENT IN NEDOA</scope>
    <scope>FUNCTION</scope>
</reference>
<proteinExistence type="evidence at protein level"/>
<gene>
    <name type="primary">SNF8</name>
    <name type="synonym">EAP30</name>
</gene>
<protein>
    <recommendedName>
        <fullName>Vacuolar-sorting protein SNF8</fullName>
    </recommendedName>
    <alternativeName>
        <fullName>ELL-associated protein of 30 kDa</fullName>
    </alternativeName>
    <alternativeName>
        <fullName>ESCRT-II complex subunit VPS22</fullName>
        <shortName>hVps22</shortName>
    </alternativeName>
</protein>
<sequence>MHRRGVGAGAIAKKKLAEAKYKERGTVLAEDQLAQMSKQLDMFKTNLEEFASKHKQEIRKNPEFRVQFQDMCATIGVDPLASGKGFWSEMLGVGDFYYELGVQIIEVCLALKHRNGGLITLEELHQQVLKGRGKFAQDVSQDDLIRAIKKLKALGTGFGIIPVGGTYLIQSVPAELNMDHTVVLQLAEKNGYVTVSEIKASLKWETERARQVLEHLLKEGLAWLDLQAPGEAHYWLPALFTDLYSQEITAEEAREALP</sequence>
<accession>Q96H20</accession>
<accession>Q8IXY3</accession>
<accession>Q9UN50</accession>
<organism>
    <name type="scientific">Homo sapiens</name>
    <name type="common">Human</name>
    <dbReference type="NCBI Taxonomy" id="9606"/>
    <lineage>
        <taxon>Eukaryota</taxon>
        <taxon>Metazoa</taxon>
        <taxon>Chordata</taxon>
        <taxon>Craniata</taxon>
        <taxon>Vertebrata</taxon>
        <taxon>Euteleostomi</taxon>
        <taxon>Mammalia</taxon>
        <taxon>Eutheria</taxon>
        <taxon>Euarchontoglires</taxon>
        <taxon>Primates</taxon>
        <taxon>Haplorrhini</taxon>
        <taxon>Catarrhini</taxon>
        <taxon>Hominidae</taxon>
        <taxon>Homo</taxon>
    </lineage>
</organism>
<name>SNF8_HUMAN</name>
<keyword id="KW-0002">3D-structure</keyword>
<keyword id="KW-0025">Alternative splicing</keyword>
<keyword id="KW-0175">Coiled coil</keyword>
<keyword id="KW-0963">Cytoplasm</keyword>
<keyword id="KW-0225">Disease variant</keyword>
<keyword id="KW-0967">Endosome</keyword>
<keyword id="KW-0887">Epilepsy</keyword>
<keyword id="KW-0991">Intellectual disability</keyword>
<keyword id="KW-0472">Membrane</keyword>
<keyword id="KW-0488">Methylation</keyword>
<keyword id="KW-0539">Nucleus</keyword>
<keyword id="KW-0653">Protein transport</keyword>
<keyword id="KW-1267">Proteomics identification</keyword>
<keyword id="KW-1185">Reference proteome</keyword>
<keyword id="KW-0804">Transcription</keyword>
<keyword id="KW-0805">Transcription regulation</keyword>
<keyword id="KW-0813">Transport</keyword>
<evidence type="ECO:0000255" key="1"/>
<evidence type="ECO:0000269" key="2">
    <source>
    </source>
</evidence>
<evidence type="ECO:0000269" key="3">
    <source>
    </source>
</evidence>
<evidence type="ECO:0000269" key="4">
    <source>
    </source>
</evidence>
<evidence type="ECO:0000269" key="5">
    <source>
    </source>
</evidence>
<evidence type="ECO:0000269" key="6">
    <source>
    </source>
</evidence>
<evidence type="ECO:0000269" key="7">
    <source>
    </source>
</evidence>
<evidence type="ECO:0000269" key="8">
    <source>
    </source>
</evidence>
<evidence type="ECO:0000269" key="9">
    <source>
    </source>
</evidence>
<evidence type="ECO:0000269" key="10">
    <source>
    </source>
</evidence>
<evidence type="ECO:0000269" key="11">
    <source>
    </source>
</evidence>
<evidence type="ECO:0000269" key="12">
    <source>
    </source>
</evidence>
<evidence type="ECO:0000269" key="13">
    <source>
    </source>
</evidence>
<evidence type="ECO:0000303" key="14">
    <source>
    </source>
</evidence>
<evidence type="ECO:0000305" key="15"/>
<evidence type="ECO:0007744" key="16">
    <source>
    </source>
</evidence>
<evidence type="ECO:0007829" key="17">
    <source>
        <dbReference type="PDB" id="3CUQ"/>
    </source>
</evidence>
<dbReference type="EMBL" id="AF156102">
    <property type="protein sequence ID" value="AAD46560.1"/>
    <property type="molecule type" value="mRNA"/>
</dbReference>
<dbReference type="EMBL" id="BC008976">
    <property type="protein sequence ID" value="AAH08976.1"/>
    <property type="molecule type" value="mRNA"/>
</dbReference>
<dbReference type="EMBL" id="BC038830">
    <property type="protein sequence ID" value="AAH38830.1"/>
    <property type="molecule type" value="mRNA"/>
</dbReference>
<dbReference type="CCDS" id="CCDS11541.1">
    <molecule id="Q96H20-1"/>
</dbReference>
<dbReference type="CCDS" id="CCDS82156.1">
    <molecule id="Q96H20-2"/>
</dbReference>
<dbReference type="RefSeq" id="NP_001304121.1">
    <molecule id="Q96H20-2"/>
    <property type="nucleotide sequence ID" value="NM_001317192.2"/>
</dbReference>
<dbReference type="RefSeq" id="NP_001304122.1">
    <property type="nucleotide sequence ID" value="NM_001317193.1"/>
</dbReference>
<dbReference type="RefSeq" id="NP_001304123.1">
    <property type="nucleotide sequence ID" value="NM_001317194.1"/>
</dbReference>
<dbReference type="RefSeq" id="NP_009172.2">
    <molecule id="Q96H20-1"/>
    <property type="nucleotide sequence ID" value="NM_007241.3"/>
</dbReference>
<dbReference type="PDB" id="2ZME">
    <property type="method" value="X-ray"/>
    <property type="resolution" value="2.90 A"/>
    <property type="chains" value="A=1-258"/>
</dbReference>
<dbReference type="PDB" id="3CUQ">
    <property type="method" value="X-ray"/>
    <property type="resolution" value="2.61 A"/>
    <property type="chains" value="A=25-258"/>
</dbReference>
<dbReference type="PDBsum" id="2ZME"/>
<dbReference type="PDBsum" id="3CUQ"/>
<dbReference type="SMR" id="Q96H20"/>
<dbReference type="BioGRID" id="116425">
    <property type="interactions" value="92"/>
</dbReference>
<dbReference type="ComplexPortal" id="CPX-2506">
    <property type="entry name" value="ESCRT-II complex"/>
</dbReference>
<dbReference type="CORUM" id="Q96H20"/>
<dbReference type="FunCoup" id="Q96H20">
    <property type="interactions" value="2596"/>
</dbReference>
<dbReference type="IntAct" id="Q96H20">
    <property type="interactions" value="45"/>
</dbReference>
<dbReference type="MINT" id="Q96H20"/>
<dbReference type="STRING" id="9606.ENSP00000421380"/>
<dbReference type="iPTMnet" id="Q96H20"/>
<dbReference type="MetOSite" id="Q96H20"/>
<dbReference type="PhosphoSitePlus" id="Q96H20"/>
<dbReference type="BioMuta" id="SNF8"/>
<dbReference type="DMDM" id="73919323"/>
<dbReference type="jPOST" id="Q96H20"/>
<dbReference type="MassIVE" id="Q96H20"/>
<dbReference type="PaxDb" id="9606-ENSP00000421380"/>
<dbReference type="PeptideAtlas" id="Q96H20"/>
<dbReference type="ProteomicsDB" id="76695">
    <molecule id="Q96H20-1"/>
</dbReference>
<dbReference type="ProteomicsDB" id="76696">
    <molecule id="Q96H20-2"/>
</dbReference>
<dbReference type="Pumba" id="Q96H20"/>
<dbReference type="Antibodypedia" id="30335">
    <property type="antibodies" value="203 antibodies from 22 providers"/>
</dbReference>
<dbReference type="DNASU" id="11267"/>
<dbReference type="Ensembl" id="ENST00000290330.7">
    <molecule id="Q96H20-2"/>
    <property type="protein sequence ID" value="ENSP00000290330.3"/>
    <property type="gene ID" value="ENSG00000159210.10"/>
</dbReference>
<dbReference type="Ensembl" id="ENST00000502492.6">
    <molecule id="Q96H20-1"/>
    <property type="protein sequence ID" value="ENSP00000421380.1"/>
    <property type="gene ID" value="ENSG00000159210.10"/>
</dbReference>
<dbReference type="GeneID" id="11267"/>
<dbReference type="KEGG" id="hsa:11267"/>
<dbReference type="MANE-Select" id="ENST00000502492.6">
    <property type="protein sequence ID" value="ENSP00000421380.1"/>
    <property type="RefSeq nucleotide sequence ID" value="NM_007241.4"/>
    <property type="RefSeq protein sequence ID" value="NP_009172.2"/>
</dbReference>
<dbReference type="UCSC" id="uc002ioj.5">
    <molecule id="Q96H20-1"/>
    <property type="organism name" value="human"/>
</dbReference>
<dbReference type="AGR" id="HGNC:17028"/>
<dbReference type="CTD" id="11267"/>
<dbReference type="DisGeNET" id="11267"/>
<dbReference type="GeneCards" id="SNF8"/>
<dbReference type="HGNC" id="HGNC:17028">
    <property type="gene designation" value="SNF8"/>
</dbReference>
<dbReference type="HPA" id="ENSG00000159210">
    <property type="expression patterns" value="Low tissue specificity"/>
</dbReference>
<dbReference type="MalaCards" id="SNF8"/>
<dbReference type="MIM" id="610904">
    <property type="type" value="gene"/>
</dbReference>
<dbReference type="MIM" id="620783">
    <property type="type" value="phenotype"/>
</dbReference>
<dbReference type="MIM" id="620784">
    <property type="type" value="phenotype"/>
</dbReference>
<dbReference type="neXtProt" id="NX_Q96H20"/>
<dbReference type="OpenTargets" id="ENSG00000159210"/>
<dbReference type="PharmGKB" id="PA142670892"/>
<dbReference type="VEuPathDB" id="HostDB:ENSG00000159210"/>
<dbReference type="eggNOG" id="KOG3341">
    <property type="taxonomic scope" value="Eukaryota"/>
</dbReference>
<dbReference type="GeneTree" id="ENSGT00390000007843"/>
<dbReference type="HOGENOM" id="CLU_070147_2_0_1"/>
<dbReference type="InParanoid" id="Q96H20"/>
<dbReference type="OMA" id="QIVEVCM"/>
<dbReference type="OrthoDB" id="283883at2759"/>
<dbReference type="PAN-GO" id="Q96H20">
    <property type="GO annotations" value="2 GO annotations based on evolutionary models"/>
</dbReference>
<dbReference type="PhylomeDB" id="Q96H20"/>
<dbReference type="TreeFam" id="TF105950"/>
<dbReference type="PathwayCommons" id="Q96H20"/>
<dbReference type="Reactome" id="R-HSA-917729">
    <property type="pathway name" value="Endosomal Sorting Complex Required For Transport (ESCRT)"/>
</dbReference>
<dbReference type="Reactome" id="R-HSA-9610379">
    <property type="pathway name" value="HCMV Late Events"/>
</dbReference>
<dbReference type="SignaLink" id="Q96H20"/>
<dbReference type="BioGRID-ORCS" id="11267">
    <property type="hits" value="688 hits in 1178 CRISPR screens"/>
</dbReference>
<dbReference type="ChiTaRS" id="SNF8">
    <property type="organism name" value="human"/>
</dbReference>
<dbReference type="EvolutionaryTrace" id="Q96H20"/>
<dbReference type="GeneWiki" id="SNF8"/>
<dbReference type="GenomeRNAi" id="11267"/>
<dbReference type="Pharos" id="Q96H20">
    <property type="development level" value="Tbio"/>
</dbReference>
<dbReference type="PRO" id="PR:Q96H20"/>
<dbReference type="Proteomes" id="UP000005640">
    <property type="component" value="Chromosome 17"/>
</dbReference>
<dbReference type="RNAct" id="Q96H20">
    <property type="molecule type" value="protein"/>
</dbReference>
<dbReference type="Bgee" id="ENSG00000159210">
    <property type="expression patterns" value="Expressed in apex of heart and 204 other cell types or tissues"/>
</dbReference>
<dbReference type="ExpressionAtlas" id="Q96H20">
    <property type="expression patterns" value="baseline and differential"/>
</dbReference>
<dbReference type="GO" id="GO:0005737">
    <property type="term" value="C:cytoplasm"/>
    <property type="evidence" value="ECO:0000314"/>
    <property type="project" value="UniProtKB"/>
</dbReference>
<dbReference type="GO" id="GO:0005829">
    <property type="term" value="C:cytosol"/>
    <property type="evidence" value="ECO:0000314"/>
    <property type="project" value="HPA"/>
</dbReference>
<dbReference type="GO" id="GO:0010008">
    <property type="term" value="C:endosome membrane"/>
    <property type="evidence" value="ECO:0000314"/>
    <property type="project" value="UniProtKB"/>
</dbReference>
<dbReference type="GO" id="GO:0000814">
    <property type="term" value="C:ESCRT II complex"/>
    <property type="evidence" value="ECO:0000314"/>
    <property type="project" value="UniProtKB"/>
</dbReference>
<dbReference type="GO" id="GO:0070062">
    <property type="term" value="C:extracellular exosome"/>
    <property type="evidence" value="ECO:0007005"/>
    <property type="project" value="UniProtKB"/>
</dbReference>
<dbReference type="GO" id="GO:0031902">
    <property type="term" value="C:late endosome membrane"/>
    <property type="evidence" value="ECO:0000314"/>
    <property type="project" value="UniProtKB"/>
</dbReference>
<dbReference type="GO" id="GO:0016020">
    <property type="term" value="C:membrane"/>
    <property type="evidence" value="ECO:0000314"/>
    <property type="project" value="UniProtKB"/>
</dbReference>
<dbReference type="GO" id="GO:0005654">
    <property type="term" value="C:nucleoplasm"/>
    <property type="evidence" value="ECO:0000314"/>
    <property type="project" value="HPA"/>
</dbReference>
<dbReference type="GO" id="GO:0005634">
    <property type="term" value="C:nucleus"/>
    <property type="evidence" value="ECO:0000314"/>
    <property type="project" value="UniProtKB"/>
</dbReference>
<dbReference type="GO" id="GO:0048471">
    <property type="term" value="C:perinuclear region of cytoplasm"/>
    <property type="evidence" value="ECO:0000314"/>
    <property type="project" value="UniProtKB"/>
</dbReference>
<dbReference type="GO" id="GO:0005886">
    <property type="term" value="C:plasma membrane"/>
    <property type="evidence" value="ECO:0000314"/>
    <property type="project" value="UniProtKB"/>
</dbReference>
<dbReference type="GO" id="GO:0055037">
    <property type="term" value="C:recycling endosome"/>
    <property type="evidence" value="ECO:0000314"/>
    <property type="project" value="UniProtKB"/>
</dbReference>
<dbReference type="GO" id="GO:0005667">
    <property type="term" value="C:transcription regulator complex"/>
    <property type="evidence" value="ECO:0000314"/>
    <property type="project" value="MGI"/>
</dbReference>
<dbReference type="GO" id="GO:0016247">
    <property type="term" value="F:channel regulator activity"/>
    <property type="evidence" value="ECO:0000314"/>
    <property type="project" value="UniProtKB"/>
</dbReference>
<dbReference type="GO" id="GO:0008289">
    <property type="term" value="F:lipid binding"/>
    <property type="evidence" value="ECO:0000353"/>
    <property type="project" value="DisProt"/>
</dbReference>
<dbReference type="GO" id="GO:0042803">
    <property type="term" value="F:protein homodimerization activity"/>
    <property type="evidence" value="ECO:0000353"/>
    <property type="project" value="UniProtKB"/>
</dbReference>
<dbReference type="GO" id="GO:0045022">
    <property type="term" value="P:early endosome to late endosome transport"/>
    <property type="evidence" value="ECO:0000315"/>
    <property type="project" value="UniProtKB"/>
</dbReference>
<dbReference type="GO" id="GO:0032456">
    <property type="term" value="P:endocytic recycling"/>
    <property type="evidence" value="ECO:0000315"/>
    <property type="project" value="UniProtKB"/>
</dbReference>
<dbReference type="GO" id="GO:0016236">
    <property type="term" value="P:macroautophagy"/>
    <property type="evidence" value="ECO:0000315"/>
    <property type="project" value="UniProtKB"/>
</dbReference>
<dbReference type="GO" id="GO:0090148">
    <property type="term" value="P:membrane fission"/>
    <property type="evidence" value="ECO:0000303"/>
    <property type="project" value="ComplexPortal"/>
</dbReference>
<dbReference type="GO" id="GO:0036258">
    <property type="term" value="P:multivesicular body assembly"/>
    <property type="evidence" value="ECO:0000315"/>
    <property type="project" value="UniProtKB"/>
</dbReference>
<dbReference type="GO" id="GO:0071985">
    <property type="term" value="P:multivesicular body sorting pathway"/>
    <property type="evidence" value="ECO:0000315"/>
    <property type="project" value="UniProtKB"/>
</dbReference>
<dbReference type="GO" id="GO:1903543">
    <property type="term" value="P:positive regulation of exosomal secretion"/>
    <property type="evidence" value="ECO:0000315"/>
    <property type="project" value="UniProtKB"/>
</dbReference>
<dbReference type="GO" id="GO:0010628">
    <property type="term" value="P:positive regulation of gene expression"/>
    <property type="evidence" value="ECO:0000315"/>
    <property type="project" value="UniProtKB"/>
</dbReference>
<dbReference type="GO" id="GO:0045732">
    <property type="term" value="P:positive regulation of protein catabolic process"/>
    <property type="evidence" value="ECO:0000315"/>
    <property type="project" value="UniProtKB"/>
</dbReference>
<dbReference type="GO" id="GO:0043328">
    <property type="term" value="P:protein transport to vacuole involved in ubiquitin-dependent protein catabolic process via the multivesicular body sorting pathway"/>
    <property type="evidence" value="ECO:0000318"/>
    <property type="project" value="GO_Central"/>
</dbReference>
<dbReference type="GO" id="GO:0042176">
    <property type="term" value="P:regulation of protein catabolic process"/>
    <property type="evidence" value="ECO:0000315"/>
    <property type="project" value="UniProtKB"/>
</dbReference>
<dbReference type="GO" id="GO:0061635">
    <property type="term" value="P:regulation of protein complex stability"/>
    <property type="evidence" value="ECO:0000315"/>
    <property type="project" value="UniProtKB"/>
</dbReference>
<dbReference type="GO" id="GO:0006357">
    <property type="term" value="P:regulation of transcription by RNA polymerase II"/>
    <property type="evidence" value="ECO:0000314"/>
    <property type="project" value="MGI"/>
</dbReference>
<dbReference type="DisProt" id="DP02598"/>
<dbReference type="FunFam" id="1.10.10.10:FF:000085">
    <property type="entry name" value="Vacuolar-sorting protein SNF8"/>
    <property type="match status" value="1"/>
</dbReference>
<dbReference type="FunFam" id="1.10.10.10:FF:000234">
    <property type="entry name" value="Vacuolar-sorting protein SNF8"/>
    <property type="match status" value="1"/>
</dbReference>
<dbReference type="Gene3D" id="6.10.140.180">
    <property type="match status" value="1"/>
</dbReference>
<dbReference type="Gene3D" id="1.10.10.10">
    <property type="entry name" value="Winged helix-like DNA-binding domain superfamily/Winged helix DNA-binding domain"/>
    <property type="match status" value="2"/>
</dbReference>
<dbReference type="InterPro" id="IPR016689">
    <property type="entry name" value="ESCRT-2_cplx_Snf8"/>
</dbReference>
<dbReference type="InterPro" id="IPR040608">
    <property type="entry name" value="Snf8/Vps36"/>
</dbReference>
<dbReference type="InterPro" id="IPR036388">
    <property type="entry name" value="WH-like_DNA-bd_sf"/>
</dbReference>
<dbReference type="InterPro" id="IPR036390">
    <property type="entry name" value="WH_DNA-bd_sf"/>
</dbReference>
<dbReference type="PANTHER" id="PTHR12806">
    <property type="entry name" value="EAP30 SUBUNIT OF ELL COMPLEX"/>
    <property type="match status" value="1"/>
</dbReference>
<dbReference type="PANTHER" id="PTHR12806:SF0">
    <property type="entry name" value="VACUOLAR-SORTING PROTEIN SNF8"/>
    <property type="match status" value="1"/>
</dbReference>
<dbReference type="Pfam" id="PF04157">
    <property type="entry name" value="EAP30"/>
    <property type="match status" value="1"/>
</dbReference>
<dbReference type="PIRSF" id="PIRSF017215">
    <property type="entry name" value="ESCRT2_Vps22"/>
    <property type="match status" value="1"/>
</dbReference>
<dbReference type="SUPFAM" id="SSF46785">
    <property type="entry name" value="Winged helix' DNA-binding domain"/>
    <property type="match status" value="2"/>
</dbReference>